<name>RL1_AZOVD</name>
<reference key="1">
    <citation type="journal article" date="2009" name="J. Bacteriol.">
        <title>Genome sequence of Azotobacter vinelandii, an obligate aerobe specialized to support diverse anaerobic metabolic processes.</title>
        <authorList>
            <person name="Setubal J.C."/>
            <person name="Dos Santos P."/>
            <person name="Goldman B.S."/>
            <person name="Ertesvaag H."/>
            <person name="Espin G."/>
            <person name="Rubio L.M."/>
            <person name="Valla S."/>
            <person name="Almeida N.F."/>
            <person name="Balasubramanian D."/>
            <person name="Cromes L."/>
            <person name="Curatti L."/>
            <person name="Du Z."/>
            <person name="Godsy E."/>
            <person name="Goodner B."/>
            <person name="Hellner-Burris K."/>
            <person name="Hernandez J.A."/>
            <person name="Houmiel K."/>
            <person name="Imperial J."/>
            <person name="Kennedy C."/>
            <person name="Larson T.J."/>
            <person name="Latreille P."/>
            <person name="Ligon L.S."/>
            <person name="Lu J."/>
            <person name="Maerk M."/>
            <person name="Miller N.M."/>
            <person name="Norton S."/>
            <person name="O'Carroll I.P."/>
            <person name="Paulsen I."/>
            <person name="Raulfs E.C."/>
            <person name="Roemer R."/>
            <person name="Rosser J."/>
            <person name="Segura D."/>
            <person name="Slater S."/>
            <person name="Stricklin S.L."/>
            <person name="Studholme D.J."/>
            <person name="Sun J."/>
            <person name="Viana C.J."/>
            <person name="Wallin E."/>
            <person name="Wang B."/>
            <person name="Wheeler C."/>
            <person name="Zhu H."/>
            <person name="Dean D.R."/>
            <person name="Dixon R."/>
            <person name="Wood D."/>
        </authorList>
    </citation>
    <scope>NUCLEOTIDE SEQUENCE [LARGE SCALE GENOMIC DNA]</scope>
    <source>
        <strain>DJ / ATCC BAA-1303</strain>
    </source>
</reference>
<feature type="chain" id="PRO_1000214411" description="Large ribosomal subunit protein uL1">
    <location>
        <begin position="1"/>
        <end position="231"/>
    </location>
</feature>
<accession>C1DKK2</accession>
<evidence type="ECO:0000255" key="1">
    <source>
        <dbReference type="HAMAP-Rule" id="MF_01318"/>
    </source>
</evidence>
<evidence type="ECO:0000305" key="2"/>
<comment type="function">
    <text evidence="1">Binds directly to 23S rRNA. The L1 stalk is quite mobile in the ribosome, and is involved in E site tRNA release.</text>
</comment>
<comment type="function">
    <text evidence="1">Protein L1 is also a translational repressor protein, it controls the translation of the L11 operon by binding to its mRNA.</text>
</comment>
<comment type="subunit">
    <text evidence="1">Part of the 50S ribosomal subunit.</text>
</comment>
<comment type="similarity">
    <text evidence="1">Belongs to the universal ribosomal protein uL1 family.</text>
</comment>
<dbReference type="EMBL" id="CP001157">
    <property type="protein sequence ID" value="ACO76865.1"/>
    <property type="molecule type" value="Genomic_DNA"/>
</dbReference>
<dbReference type="RefSeq" id="WP_012699293.1">
    <property type="nucleotide sequence ID" value="NC_012560.1"/>
</dbReference>
<dbReference type="SMR" id="C1DKK2"/>
<dbReference type="STRING" id="322710.Avin_06130"/>
<dbReference type="EnsemblBacteria" id="ACO76865">
    <property type="protein sequence ID" value="ACO76865"/>
    <property type="gene ID" value="Avin_06130"/>
</dbReference>
<dbReference type="GeneID" id="88184026"/>
<dbReference type="KEGG" id="avn:Avin_06130"/>
<dbReference type="eggNOG" id="COG0081">
    <property type="taxonomic scope" value="Bacteria"/>
</dbReference>
<dbReference type="HOGENOM" id="CLU_062853_0_0_6"/>
<dbReference type="OrthoDB" id="9803740at2"/>
<dbReference type="Proteomes" id="UP000002424">
    <property type="component" value="Chromosome"/>
</dbReference>
<dbReference type="GO" id="GO:0022625">
    <property type="term" value="C:cytosolic large ribosomal subunit"/>
    <property type="evidence" value="ECO:0007669"/>
    <property type="project" value="TreeGrafter"/>
</dbReference>
<dbReference type="GO" id="GO:0019843">
    <property type="term" value="F:rRNA binding"/>
    <property type="evidence" value="ECO:0007669"/>
    <property type="project" value="UniProtKB-UniRule"/>
</dbReference>
<dbReference type="GO" id="GO:0003735">
    <property type="term" value="F:structural constituent of ribosome"/>
    <property type="evidence" value="ECO:0007669"/>
    <property type="project" value="InterPro"/>
</dbReference>
<dbReference type="GO" id="GO:0000049">
    <property type="term" value="F:tRNA binding"/>
    <property type="evidence" value="ECO:0007669"/>
    <property type="project" value="UniProtKB-KW"/>
</dbReference>
<dbReference type="GO" id="GO:0006417">
    <property type="term" value="P:regulation of translation"/>
    <property type="evidence" value="ECO:0007669"/>
    <property type="project" value="UniProtKB-KW"/>
</dbReference>
<dbReference type="GO" id="GO:0006412">
    <property type="term" value="P:translation"/>
    <property type="evidence" value="ECO:0007669"/>
    <property type="project" value="UniProtKB-UniRule"/>
</dbReference>
<dbReference type="CDD" id="cd00403">
    <property type="entry name" value="Ribosomal_L1"/>
    <property type="match status" value="1"/>
</dbReference>
<dbReference type="FunFam" id="3.40.50.790:FF:000001">
    <property type="entry name" value="50S ribosomal protein L1"/>
    <property type="match status" value="1"/>
</dbReference>
<dbReference type="Gene3D" id="3.30.190.20">
    <property type="match status" value="1"/>
</dbReference>
<dbReference type="Gene3D" id="3.40.50.790">
    <property type="match status" value="1"/>
</dbReference>
<dbReference type="HAMAP" id="MF_01318_B">
    <property type="entry name" value="Ribosomal_uL1_B"/>
    <property type="match status" value="1"/>
</dbReference>
<dbReference type="InterPro" id="IPR005878">
    <property type="entry name" value="Ribosom_uL1_bac-type"/>
</dbReference>
<dbReference type="InterPro" id="IPR002143">
    <property type="entry name" value="Ribosomal_uL1"/>
</dbReference>
<dbReference type="InterPro" id="IPR023674">
    <property type="entry name" value="Ribosomal_uL1-like"/>
</dbReference>
<dbReference type="InterPro" id="IPR028364">
    <property type="entry name" value="Ribosomal_uL1/biogenesis"/>
</dbReference>
<dbReference type="InterPro" id="IPR016095">
    <property type="entry name" value="Ribosomal_uL1_3-a/b-sand"/>
</dbReference>
<dbReference type="InterPro" id="IPR023673">
    <property type="entry name" value="Ribosomal_uL1_CS"/>
</dbReference>
<dbReference type="NCBIfam" id="TIGR01169">
    <property type="entry name" value="rplA_bact"/>
    <property type="match status" value="1"/>
</dbReference>
<dbReference type="PANTHER" id="PTHR36427">
    <property type="entry name" value="54S RIBOSOMAL PROTEIN L1, MITOCHONDRIAL"/>
    <property type="match status" value="1"/>
</dbReference>
<dbReference type="PANTHER" id="PTHR36427:SF3">
    <property type="entry name" value="LARGE RIBOSOMAL SUBUNIT PROTEIN UL1M"/>
    <property type="match status" value="1"/>
</dbReference>
<dbReference type="Pfam" id="PF00687">
    <property type="entry name" value="Ribosomal_L1"/>
    <property type="match status" value="1"/>
</dbReference>
<dbReference type="PIRSF" id="PIRSF002155">
    <property type="entry name" value="Ribosomal_L1"/>
    <property type="match status" value="1"/>
</dbReference>
<dbReference type="SUPFAM" id="SSF56808">
    <property type="entry name" value="Ribosomal protein L1"/>
    <property type="match status" value="1"/>
</dbReference>
<dbReference type="PROSITE" id="PS01199">
    <property type="entry name" value="RIBOSOMAL_L1"/>
    <property type="match status" value="1"/>
</dbReference>
<keyword id="KW-0678">Repressor</keyword>
<keyword id="KW-0687">Ribonucleoprotein</keyword>
<keyword id="KW-0689">Ribosomal protein</keyword>
<keyword id="KW-0694">RNA-binding</keyword>
<keyword id="KW-0699">rRNA-binding</keyword>
<keyword id="KW-0810">Translation regulation</keyword>
<keyword id="KW-0820">tRNA-binding</keyword>
<proteinExistence type="inferred from homology"/>
<protein>
    <recommendedName>
        <fullName evidence="1">Large ribosomal subunit protein uL1</fullName>
    </recommendedName>
    <alternativeName>
        <fullName evidence="2">50S ribosomal protein L1</fullName>
    </alternativeName>
</protein>
<gene>
    <name evidence="1" type="primary">rplA</name>
    <name type="ordered locus">Avin_06130</name>
</gene>
<organism>
    <name type="scientific">Azotobacter vinelandii (strain DJ / ATCC BAA-1303)</name>
    <dbReference type="NCBI Taxonomy" id="322710"/>
    <lineage>
        <taxon>Bacteria</taxon>
        <taxon>Pseudomonadati</taxon>
        <taxon>Pseudomonadota</taxon>
        <taxon>Gammaproteobacteria</taxon>
        <taxon>Pseudomonadales</taxon>
        <taxon>Pseudomonadaceae</taxon>
        <taxon>Azotobacter</taxon>
    </lineage>
</organism>
<sequence>MAKLTKRQKAIAAKVEAGKQYGFEEAAALLAELSTIKFKESVDIAINLGVDPRKSDQVVRGATVLPNGTGKDVRVAVFTQGPAAEAALAAGADRVGMDELAAEMKGGDLNYDVVIASPDAMRVVGQLGQILGPRGLMPNPKVGTVTPDVASAVKNAKAGQVRFRTDKNGIIHASVGKIDFEPIKLKQNVEALLSDLKRLKPSTSKGIYVKRVTLSSTMGPGLVIDQASLEA</sequence>